<sequence length="277" mass="30557">MQRLFLLVAVMLLSGCLTAPPKEAARPTLMPRAQSYKDLTHLPAPTGKIFVSVYNIQDETGQFKPYPASNFSTAVPQSATAMLVTALKDSRWFIPLERQGLQNLLNERKIIRAAQENGTVAINNRIPLQSLTAANIMVEGSIIGYESNVKSGGVGARYFGIGADTQYQLDQIAVNLRVVNVSTGEILSSVNTSKTILSYEVQAGVFRFIDYQRLLEGEVGYTSNEPVMLCLMSAIETGVIFLINDGIDRGLWDLQNKAERQNDILVKYRHMSVPPES</sequence>
<reference key="1">
    <citation type="journal article" date="1995" name="Mol. Microbiol.">
        <title>Expression of two csg operons is required for production of fibronectin- and congo red-binding curli polymers in Escherichia coli K-12.</title>
        <authorList>
            <person name="Hammar M."/>
            <person name="Arnqvist A."/>
            <person name="Bian Z."/>
            <person name="Olsen A."/>
            <person name="Normark S."/>
        </authorList>
    </citation>
    <scope>NUCLEOTIDE SEQUENCE [GENOMIC DNA]</scope>
    <source>
        <strain>K12 / MC4100 / ATCC 35695 / DSM 6574</strain>
    </source>
</reference>
<reference key="2">
    <citation type="journal article" date="1996" name="DNA Res.">
        <title>A 718-kb DNA sequence of the Escherichia coli K-12 genome corresponding to the 12.7-28.0 min region on the linkage map.</title>
        <authorList>
            <person name="Oshima T."/>
            <person name="Aiba H."/>
            <person name="Baba T."/>
            <person name="Fujita K."/>
            <person name="Hayashi K."/>
            <person name="Honjo A."/>
            <person name="Ikemoto K."/>
            <person name="Inada T."/>
            <person name="Itoh T."/>
            <person name="Kajihara M."/>
            <person name="Kanai K."/>
            <person name="Kashimoto K."/>
            <person name="Kimura S."/>
            <person name="Kitagawa M."/>
            <person name="Makino K."/>
            <person name="Masuda S."/>
            <person name="Miki T."/>
            <person name="Mizobuchi K."/>
            <person name="Mori H."/>
            <person name="Motomura K."/>
            <person name="Nakamura Y."/>
            <person name="Nashimoto H."/>
            <person name="Nishio Y."/>
            <person name="Saito N."/>
            <person name="Sampei G."/>
            <person name="Seki Y."/>
            <person name="Tagami H."/>
            <person name="Takemoto K."/>
            <person name="Wada C."/>
            <person name="Yamamoto Y."/>
            <person name="Yano M."/>
            <person name="Horiuchi T."/>
        </authorList>
    </citation>
    <scope>NUCLEOTIDE SEQUENCE [LARGE SCALE GENOMIC DNA]</scope>
    <source>
        <strain>K12 / W3110 / ATCC 27325 / DSM 5911</strain>
    </source>
</reference>
<reference key="3">
    <citation type="journal article" date="1997" name="Science">
        <title>The complete genome sequence of Escherichia coli K-12.</title>
        <authorList>
            <person name="Blattner F.R."/>
            <person name="Plunkett G. III"/>
            <person name="Bloch C.A."/>
            <person name="Perna N.T."/>
            <person name="Burland V."/>
            <person name="Riley M."/>
            <person name="Collado-Vides J."/>
            <person name="Glasner J.D."/>
            <person name="Rode C.K."/>
            <person name="Mayhew G.F."/>
            <person name="Gregor J."/>
            <person name="Davis N.W."/>
            <person name="Kirkpatrick H.A."/>
            <person name="Goeden M.A."/>
            <person name="Rose D.J."/>
            <person name="Mau B."/>
            <person name="Shao Y."/>
        </authorList>
    </citation>
    <scope>NUCLEOTIDE SEQUENCE [LARGE SCALE GENOMIC DNA]</scope>
    <source>
        <strain>K12 / MG1655 / ATCC 47076</strain>
    </source>
</reference>
<reference key="4">
    <citation type="journal article" date="2006" name="Mol. Syst. Biol.">
        <title>Highly accurate genome sequences of Escherichia coli K-12 strains MG1655 and W3110.</title>
        <authorList>
            <person name="Hayashi K."/>
            <person name="Morooka N."/>
            <person name="Yamamoto Y."/>
            <person name="Fujita K."/>
            <person name="Isono K."/>
            <person name="Choi S."/>
            <person name="Ohtsubo E."/>
            <person name="Baba T."/>
            <person name="Wanner B.L."/>
            <person name="Mori H."/>
            <person name="Horiuchi T."/>
        </authorList>
    </citation>
    <scope>NUCLEOTIDE SEQUENCE [LARGE SCALE GENOMIC DNA]</scope>
    <source>
        <strain>K12 / W3110 / ATCC 27325 / DSM 5911</strain>
    </source>
</reference>
<reference key="5">
    <citation type="submission" date="1998-08" db="EMBL/GenBank/DDBJ databases">
        <title>Avian E. coli serotype O78 csg cluster.</title>
        <authorList>
            <person name="Seijffers R."/>
            <person name="Gophna U."/>
            <person name="Ron E.Z."/>
        </authorList>
    </citation>
    <scope>NUCLEOTIDE SEQUENCE [GENOMIC DNA] OF 1-49</scope>
    <source>
        <strain>O78</strain>
    </source>
</reference>
<organism>
    <name type="scientific">Escherichia coli (strain K12)</name>
    <dbReference type="NCBI Taxonomy" id="83333"/>
    <lineage>
        <taxon>Bacteria</taxon>
        <taxon>Pseudomonadati</taxon>
        <taxon>Pseudomonadota</taxon>
        <taxon>Gammaproteobacteria</taxon>
        <taxon>Enterobacterales</taxon>
        <taxon>Enterobacteriaceae</taxon>
        <taxon>Escherichia</taxon>
    </lineage>
</organism>
<comment type="function">
    <text>May be involved in the biogenesis of curli organelles.</text>
</comment>
<comment type="interaction">
    <interactant intactId="EBI-6405292">
        <id>P0AEA2</id>
    </interactant>
    <interactant intactId="EBI-16121579">
        <id>P0AE95</id>
        <label>csgE</label>
    </interactant>
    <organismsDiffer>false</organismsDiffer>
    <experiments>3</experiments>
</comment>
<comment type="interaction">
    <interactant intactId="EBI-6405292">
        <id>P0AEA2</id>
    </interactant>
    <interactant intactId="EBI-6405292">
        <id>P0AEA2</id>
        <label>csgG</label>
    </interactant>
    <organismsDiffer>false</organismsDiffer>
    <experiments>4</experiments>
</comment>
<comment type="subcellular location">
    <subcellularLocation>
        <location evidence="1">Cell membrane</location>
        <topology evidence="1">Lipid-anchor</topology>
    </subcellularLocation>
</comment>
<comment type="similarity">
    <text evidence="2">Belongs to the CsgG family.</text>
</comment>
<gene>
    <name type="primary">csgG</name>
    <name type="ordered locus">b1037</name>
    <name type="ordered locus">JW1020</name>
</gene>
<accession>P0AEA2</accession>
<accession>P52103</accession>
<keyword id="KW-0002">3D-structure</keyword>
<keyword id="KW-1003">Cell membrane</keyword>
<keyword id="KW-0449">Lipoprotein</keyword>
<keyword id="KW-0472">Membrane</keyword>
<keyword id="KW-0564">Palmitate</keyword>
<keyword id="KW-1185">Reference proteome</keyword>
<keyword id="KW-0732">Signal</keyword>
<name>CSGG_ECOLI</name>
<protein>
    <recommendedName>
        <fullName>Curli production assembly/transport component CsgG</fullName>
    </recommendedName>
</protein>
<feature type="signal peptide" evidence="1">
    <location>
        <begin position="1"/>
        <end position="15"/>
    </location>
</feature>
<feature type="chain" id="PRO_0000021022" description="Curli production assembly/transport component CsgG">
    <location>
        <begin position="16"/>
        <end position="277"/>
    </location>
</feature>
<feature type="lipid moiety-binding region" description="N-palmitoyl cysteine" evidence="1">
    <location>
        <position position="16"/>
    </location>
</feature>
<feature type="lipid moiety-binding region" description="S-diacylglycerol cysteine" evidence="1">
    <location>
        <position position="16"/>
    </location>
</feature>
<feature type="helix" evidence="3">
    <location>
        <begin position="34"/>
        <end position="40"/>
    </location>
</feature>
<feature type="strand" evidence="3">
    <location>
        <begin position="45"/>
        <end position="47"/>
    </location>
</feature>
<feature type="strand" evidence="3">
    <location>
        <begin position="49"/>
        <end position="58"/>
    </location>
</feature>
<feature type="strand" evidence="3">
    <location>
        <begin position="73"/>
        <end position="75"/>
    </location>
</feature>
<feature type="helix" evidence="3">
    <location>
        <begin position="79"/>
        <end position="89"/>
    </location>
</feature>
<feature type="strand" evidence="3">
    <location>
        <begin position="92"/>
        <end position="97"/>
    </location>
</feature>
<feature type="helix" evidence="3">
    <location>
        <begin position="101"/>
        <end position="115"/>
    </location>
</feature>
<feature type="helix" evidence="3">
    <location>
        <begin position="122"/>
        <end position="124"/>
    </location>
</feature>
<feature type="strand" evidence="3">
    <location>
        <begin position="135"/>
        <end position="152"/>
    </location>
</feature>
<feature type="helix" evidence="3">
    <location>
        <begin position="153"/>
        <end position="159"/>
    </location>
</feature>
<feature type="strand" evidence="3">
    <location>
        <begin position="165"/>
        <end position="180"/>
    </location>
</feature>
<feature type="turn" evidence="3">
    <location>
        <begin position="181"/>
        <end position="183"/>
    </location>
</feature>
<feature type="strand" evidence="3">
    <location>
        <begin position="185"/>
        <end position="202"/>
    </location>
</feature>
<feature type="strand" evidence="3">
    <location>
        <begin position="205"/>
        <end position="210"/>
    </location>
</feature>
<feature type="helix" evidence="3">
    <location>
        <begin position="212"/>
        <end position="216"/>
    </location>
</feature>
<feature type="strand" evidence="3">
    <location>
        <begin position="220"/>
        <end position="224"/>
    </location>
</feature>
<feature type="helix" evidence="3">
    <location>
        <begin position="226"/>
        <end position="248"/>
    </location>
</feature>
<feature type="strand" evidence="3">
    <location>
        <begin position="254"/>
        <end position="256"/>
    </location>
</feature>
<feature type="helix" evidence="3">
    <location>
        <begin position="257"/>
        <end position="261"/>
    </location>
</feature>
<feature type="helix" evidence="3">
    <location>
        <begin position="263"/>
        <end position="270"/>
    </location>
</feature>
<proteinExistence type="evidence at protein level"/>
<evidence type="ECO:0000255" key="1">
    <source>
        <dbReference type="PROSITE-ProRule" id="PRU00303"/>
    </source>
</evidence>
<evidence type="ECO:0000305" key="2"/>
<evidence type="ECO:0007829" key="3">
    <source>
        <dbReference type="PDB" id="4UV2"/>
    </source>
</evidence>
<dbReference type="EMBL" id="X90754">
    <property type="protein sequence ID" value="CAA62277.1"/>
    <property type="molecule type" value="Genomic_DNA"/>
</dbReference>
<dbReference type="EMBL" id="U00096">
    <property type="protein sequence ID" value="AAC74121.1"/>
    <property type="molecule type" value="Genomic_DNA"/>
</dbReference>
<dbReference type="EMBL" id="AP009048">
    <property type="protein sequence ID" value="BAA35818.1"/>
    <property type="molecule type" value="Genomic_DNA"/>
</dbReference>
<dbReference type="EMBL" id="AH007429">
    <property type="protein sequence ID" value="AAD16022.1"/>
    <property type="molecule type" value="Genomic_DNA"/>
</dbReference>
<dbReference type="PIR" id="S70783">
    <property type="entry name" value="S70783"/>
</dbReference>
<dbReference type="RefSeq" id="NP_415555.1">
    <property type="nucleotide sequence ID" value="NC_000913.3"/>
</dbReference>
<dbReference type="RefSeq" id="WP_001189321.1">
    <property type="nucleotide sequence ID" value="NZ_SSUW01000034.1"/>
</dbReference>
<dbReference type="PDB" id="4UV2">
    <property type="method" value="X-ray"/>
    <property type="resolution" value="2.80 A"/>
    <property type="chains" value="A/B/C/D/E/F/G/H/I/J/K/L/M/N/O/P=17-277"/>
</dbReference>
<dbReference type="PDB" id="4UV3">
    <property type="method" value="X-ray"/>
    <property type="resolution" value="3.59 A"/>
    <property type="chains" value="A/B/C/D/E/F/G/H/I/J/K/L/M/N/O/P/Q/R=16-277"/>
</dbReference>
<dbReference type="PDB" id="6L7A">
    <property type="method" value="EM"/>
    <property type="resolution" value="3.38 A"/>
    <property type="chains" value="A/B/C/D/E/F/G/H/I=1-277"/>
</dbReference>
<dbReference type="PDB" id="6L7C">
    <property type="method" value="EM"/>
    <property type="resolution" value="3.34 A"/>
    <property type="chains" value="A/B/C/D/E/F/G/H/I=1-277"/>
</dbReference>
<dbReference type="PDB" id="6LQH">
    <property type="method" value="EM"/>
    <property type="resolution" value="2.94 A"/>
    <property type="chains" value="A/B/C/D/E/F/G/H/I=1-277"/>
</dbReference>
<dbReference type="PDB" id="6LQJ">
    <property type="method" value="EM"/>
    <property type="resolution" value="3.24 A"/>
    <property type="chains" value="A/B/C/D/E/F/G/H/I=1-277"/>
</dbReference>
<dbReference type="PDB" id="6SI7">
    <property type="method" value="EM"/>
    <property type="resolution" value="3.40 A"/>
    <property type="chains" value="J/K/L/M/N/O/P/Q/R=16-277"/>
</dbReference>
<dbReference type="PDB" id="7BRM">
    <property type="method" value="EM"/>
    <property type="resolution" value="3.60 A"/>
    <property type="chains" value="A/B/C/D/E/F/G/H/I=1-277"/>
</dbReference>
<dbReference type="PDBsum" id="4UV2"/>
<dbReference type="PDBsum" id="4UV3"/>
<dbReference type="PDBsum" id="6L7A"/>
<dbReference type="PDBsum" id="6L7C"/>
<dbReference type="PDBsum" id="6LQH"/>
<dbReference type="PDBsum" id="6LQJ"/>
<dbReference type="PDBsum" id="6SI7"/>
<dbReference type="PDBsum" id="7BRM"/>
<dbReference type="EMDB" id="EMD-0945"/>
<dbReference type="EMDB" id="EMD-0947"/>
<dbReference type="EMDB" id="EMD-10206"/>
<dbReference type="EMDB" id="EMD-2750"/>
<dbReference type="SMR" id="P0AEA2"/>
<dbReference type="BioGRID" id="4261532">
    <property type="interactions" value="227"/>
</dbReference>
<dbReference type="ComplexPortal" id="CPX-4743">
    <property type="entry name" value="Curli secretion complex"/>
</dbReference>
<dbReference type="DIP" id="DIP-9331N"/>
<dbReference type="FunCoup" id="P0AEA2">
    <property type="interactions" value="127"/>
</dbReference>
<dbReference type="IntAct" id="P0AEA2">
    <property type="interactions" value="1"/>
</dbReference>
<dbReference type="STRING" id="511145.b1037"/>
<dbReference type="TCDB" id="1.B.48.1.1">
    <property type="family name" value="the curli fiber subunit porin, cgsa, csgg (csgg) family"/>
</dbReference>
<dbReference type="PaxDb" id="511145-b1037"/>
<dbReference type="EnsemblBacteria" id="AAC74121">
    <property type="protein sequence ID" value="AAC74121"/>
    <property type="gene ID" value="b1037"/>
</dbReference>
<dbReference type="GeneID" id="75203625"/>
<dbReference type="GeneID" id="945619"/>
<dbReference type="KEGG" id="ecj:JW1020"/>
<dbReference type="KEGG" id="eco:b1037"/>
<dbReference type="KEGG" id="ecoc:C3026_06315"/>
<dbReference type="PATRIC" id="fig|1411691.4.peg.1234"/>
<dbReference type="EchoBASE" id="EB3189"/>
<dbReference type="eggNOG" id="COG1462">
    <property type="taxonomic scope" value="Bacteria"/>
</dbReference>
<dbReference type="HOGENOM" id="CLU_056911_0_0_6"/>
<dbReference type="InParanoid" id="P0AEA2"/>
<dbReference type="OMA" id="TQGAASM"/>
<dbReference type="OrthoDB" id="1110708at2"/>
<dbReference type="PhylomeDB" id="P0AEA2"/>
<dbReference type="BioCyc" id="EcoCyc:G6543-MONOMER"/>
<dbReference type="EvolutionaryTrace" id="P0AEA2"/>
<dbReference type="PRO" id="PR:P0AEA2"/>
<dbReference type="Proteomes" id="UP000000625">
    <property type="component" value="Chromosome"/>
</dbReference>
<dbReference type="GO" id="GO:0009279">
    <property type="term" value="C:cell outer membrane"/>
    <property type="evidence" value="ECO:0000314"/>
    <property type="project" value="ComplexPortal"/>
</dbReference>
<dbReference type="GO" id="GO:0062155">
    <property type="term" value="C:curli secretion complex"/>
    <property type="evidence" value="ECO:0000314"/>
    <property type="project" value="EcoCyc"/>
</dbReference>
<dbReference type="GO" id="GO:0030288">
    <property type="term" value="C:outer membrane-bounded periplasmic space"/>
    <property type="evidence" value="ECO:0007669"/>
    <property type="project" value="InterPro"/>
</dbReference>
<dbReference type="GO" id="GO:0005886">
    <property type="term" value="C:plasma membrane"/>
    <property type="evidence" value="ECO:0007669"/>
    <property type="project" value="UniProtKB-SubCell"/>
</dbReference>
<dbReference type="GO" id="GO:0042802">
    <property type="term" value="F:identical protein binding"/>
    <property type="evidence" value="ECO:0000314"/>
    <property type="project" value="EcoCyc"/>
</dbReference>
<dbReference type="GO" id="GO:0098775">
    <property type="term" value="P:curli assembly"/>
    <property type="evidence" value="ECO:0000315"/>
    <property type="project" value="EcoCyc"/>
</dbReference>
<dbReference type="GO" id="GO:0098777">
    <property type="term" value="P:protein secretion by the type VIII secretion system"/>
    <property type="evidence" value="ECO:0000314"/>
    <property type="project" value="EcoCyc"/>
</dbReference>
<dbReference type="GO" id="GO:0071806">
    <property type="term" value="P:protein transmembrane transport"/>
    <property type="evidence" value="ECO:0000303"/>
    <property type="project" value="ComplexPortal"/>
</dbReference>
<dbReference type="GO" id="GO:0044010">
    <property type="term" value="P:single-species biofilm formation"/>
    <property type="evidence" value="ECO:0000303"/>
    <property type="project" value="ComplexPortal"/>
</dbReference>
<dbReference type="FunFam" id="3.40.50.10610:FF:000001">
    <property type="entry name" value="Curli production assembly/transport component CsgG"/>
    <property type="match status" value="1"/>
</dbReference>
<dbReference type="FunFam" id="3.40.50.10610:FF:000003">
    <property type="entry name" value="Curli production assembly/transport component CsgG"/>
    <property type="match status" value="1"/>
</dbReference>
<dbReference type="Gene3D" id="3.40.50.10610">
    <property type="entry name" value="ABC-type transport auxiliary lipoprotein component"/>
    <property type="match status" value="2"/>
</dbReference>
<dbReference type="InterPro" id="IPR005534">
    <property type="entry name" value="Curli_assmbl/transp-comp_CsgG"/>
</dbReference>
<dbReference type="NCBIfam" id="NF011731">
    <property type="entry name" value="PRK15184.1"/>
    <property type="match status" value="1"/>
</dbReference>
<dbReference type="PANTHER" id="PTHR41164">
    <property type="entry name" value="CURLI PRODUCTION ASSEMBLY/TRANSPORT COMPONENT CSGG"/>
    <property type="match status" value="1"/>
</dbReference>
<dbReference type="PANTHER" id="PTHR41164:SF1">
    <property type="entry name" value="CURLI PRODUCTION ASSEMBLY_TRANSPORT COMPONENT CSGG"/>
    <property type="match status" value="1"/>
</dbReference>
<dbReference type="Pfam" id="PF03783">
    <property type="entry name" value="CsgG"/>
    <property type="match status" value="1"/>
</dbReference>
<dbReference type="PROSITE" id="PS51257">
    <property type="entry name" value="PROKAR_LIPOPROTEIN"/>
    <property type="match status" value="1"/>
</dbReference>